<sequence length="775" mass="88790">MKTVIARTSSKLARTPRMNEEIVGFEDVIENLRKKLLSETKGQDVISIHGMPGLGKTTLANRLYSDRSVVSQFDICAQCCVSQVYSYKDLLLSLLRDAIGDESGSRELPDNELADMLRKTLLPRRYLILVDDVWDNSAWDDLRGCFPDVNNRSRIILTTRHHEVAKYASVHSDPLHLRMFYEDESWKLLEKKVFGEQSCSPLLKDVGLRIAKLCGKLPLSIVFVAGTLSEMEKEVECWEQMANNLGGPKLSSFLEDRVIDISRLIRLWISESFIKSSEGRSLEDIAEGYLENLIGRNLVMVTQRADSDGMVKACRLHDVLLDFCKKRAAEENFLLCIKRDQSTKAVISHKQQAHLAFSKMDNLVEWSASSSLVGSVIFKSYDPYFARCPLSSHAFALSHILINFKFLKVLDLEHQVVIDFNPTEHFYLRYLSAHIDQNSIPSSISNLWNLETLILKRTPAGRLNTLLLPSTIWDMVKLRHLHIPNFRAESEDALLENSAKLYDLETLSTTYFSSVEKAELMLRKTPNLRKLICEVQFLEYPNQYHVLNFPVRLEMLKLYRFNNSKVIPFYISAPNLKYLKLSGFYLDSHYLSETADHLKHLEVLKLYRVEFGDHGEWKVSNGMFPQLKILKLNYVCLMKWIVADDAFPNLEQLVLRGCKDLMEIPFCFMDILSLKYIELDNCNKSVVKSAKDIEEAQVEDNQNTNFKLVIIKKMILQFDISHDKEIDNAFKRLASLPGVDSISIDMIEKKLTVGGDMNANEVRLVVGKLIDSGML</sequence>
<feature type="chain" id="PRO_0000233960" description="Putative late blight resistance protein homolog R1A-3">
    <location>
        <begin position="1"/>
        <end position="775"/>
    </location>
</feature>
<feature type="domain" description="NB-ARC">
    <location>
        <begin position="17"/>
        <end position="237"/>
    </location>
</feature>
<feature type="domain" description="HMA" evidence="3">
    <location>
        <begin position="711"/>
        <end position="775"/>
    </location>
</feature>
<feature type="coiled-coil region" evidence="2">
    <location>
        <begin position="16"/>
        <end position="39"/>
    </location>
</feature>
<feature type="binding site" evidence="2">
    <location>
        <begin position="50"/>
        <end position="57"/>
    </location>
    <ligand>
        <name>ATP</name>
        <dbReference type="ChEBI" id="CHEBI:30616"/>
    </ligand>
</feature>
<evidence type="ECO:0000250" key="1"/>
<evidence type="ECO:0000255" key="2"/>
<evidence type="ECO:0000255" key="3">
    <source>
        <dbReference type="PROSITE-ProRule" id="PRU00280"/>
    </source>
</evidence>
<evidence type="ECO:0000305" key="4"/>
<organism>
    <name type="scientific">Solanum demissum</name>
    <name type="common">Wild potato</name>
    <dbReference type="NCBI Taxonomy" id="50514"/>
    <lineage>
        <taxon>Eukaryota</taxon>
        <taxon>Viridiplantae</taxon>
        <taxon>Streptophyta</taxon>
        <taxon>Embryophyta</taxon>
        <taxon>Tracheophyta</taxon>
        <taxon>Spermatophyta</taxon>
        <taxon>Magnoliopsida</taxon>
        <taxon>eudicotyledons</taxon>
        <taxon>Gunneridae</taxon>
        <taxon>Pentapetalae</taxon>
        <taxon>asterids</taxon>
        <taxon>lamiids</taxon>
        <taxon>Solanales</taxon>
        <taxon>Solanaceae</taxon>
        <taxon>Solanoideae</taxon>
        <taxon>Solaneae</taxon>
        <taxon>Solanum</taxon>
    </lineage>
</organism>
<reference key="1">
    <citation type="journal article" date="2005" name="Plant J.">
        <title>The R1 resistance gene cluster contains three groups of independently evolving, type I R1 homologues and shows substantial structural variation among haplotypes of Solanum demissum.</title>
        <authorList>
            <person name="Kuang H."/>
            <person name="Wei F."/>
            <person name="Marano M.R."/>
            <person name="Wirtz U."/>
            <person name="Wang X."/>
            <person name="Liu J."/>
            <person name="Shum W.P."/>
            <person name="Zaborsky J."/>
            <person name="Tallon L.J."/>
            <person name="Rensink W."/>
            <person name="Lobst S."/>
            <person name="Zhang P."/>
            <person name="Tornqvist C.-E."/>
            <person name="Tek A."/>
            <person name="Bamberg J."/>
            <person name="Helgeson J."/>
            <person name="Fry W."/>
            <person name="You F."/>
            <person name="Luo M.-C."/>
            <person name="Jiang J."/>
            <person name="Buell C.R."/>
            <person name="Baker B."/>
        </authorList>
    </citation>
    <scope>NUCLEOTIDE SEQUENCE [GENOMIC DNA]</scope>
</reference>
<comment type="function">
    <text>Confers resistance to late blight (Phytophthora infestans) races carrying the avirulence gene Avr1. Resistance proteins guard the plant against pathogens that contain an appropriate avirulence protein via an indirect interaction with this avirulence protein. That triggers a defense system including the hypersensitive response, which restricts the pathogen growth.</text>
</comment>
<comment type="subcellular location">
    <subcellularLocation>
        <location evidence="1">Cytoplasm</location>
    </subcellularLocation>
    <subcellularLocation>
        <location evidence="1">Membrane</location>
        <topology evidence="1">Peripheral membrane protein</topology>
    </subcellularLocation>
</comment>
<comment type="miscellaneous">
    <text>This protein is encoded by the haplotype A genome of the allohexaploid Solanum demissum.</text>
</comment>
<comment type="similarity">
    <text evidence="4">Belongs to the disease resistance NB-LRR family.</text>
</comment>
<comment type="caution">
    <text evidence="4">Could be the product of a pseudogene.</text>
</comment>
<keyword id="KW-0067">ATP-binding</keyword>
<keyword id="KW-0175">Coiled coil</keyword>
<keyword id="KW-0963">Cytoplasm</keyword>
<keyword id="KW-0381">Hypersensitive response</keyword>
<keyword id="KW-0472">Membrane</keyword>
<keyword id="KW-0547">Nucleotide-binding</keyword>
<keyword id="KW-0611">Plant defense</keyword>
<proteinExistence type="uncertain"/>
<protein>
    <recommendedName>
        <fullName>Putative late blight resistance protein homolog R1A-3</fullName>
    </recommendedName>
</protein>
<gene>
    <name type="primary">R1A-3</name>
    <name type="ORF">PGEC668E02.10</name>
</gene>
<accession>Q6L440</accession>
<dbReference type="EMBL" id="AC144791">
    <property type="protein sequence ID" value="AAT39942.2"/>
    <property type="molecule type" value="Genomic_DNA"/>
</dbReference>
<dbReference type="SMR" id="Q6L440"/>
<dbReference type="GO" id="GO:0005737">
    <property type="term" value="C:cytoplasm"/>
    <property type="evidence" value="ECO:0007669"/>
    <property type="project" value="UniProtKB-SubCell"/>
</dbReference>
<dbReference type="GO" id="GO:0016020">
    <property type="term" value="C:membrane"/>
    <property type="evidence" value="ECO:0007669"/>
    <property type="project" value="UniProtKB-SubCell"/>
</dbReference>
<dbReference type="GO" id="GO:0043531">
    <property type="term" value="F:ADP binding"/>
    <property type="evidence" value="ECO:0007669"/>
    <property type="project" value="InterPro"/>
</dbReference>
<dbReference type="GO" id="GO:0005524">
    <property type="term" value="F:ATP binding"/>
    <property type="evidence" value="ECO:0007669"/>
    <property type="project" value="UniProtKB-KW"/>
</dbReference>
<dbReference type="GO" id="GO:0046872">
    <property type="term" value="F:metal ion binding"/>
    <property type="evidence" value="ECO:0007669"/>
    <property type="project" value="InterPro"/>
</dbReference>
<dbReference type="GO" id="GO:0009626">
    <property type="term" value="P:plant-type hypersensitive response"/>
    <property type="evidence" value="ECO:0007669"/>
    <property type="project" value="UniProtKB-KW"/>
</dbReference>
<dbReference type="FunFam" id="3.40.50.300:FF:001091">
    <property type="entry name" value="Probable disease resistance protein At1g61300"/>
    <property type="match status" value="1"/>
</dbReference>
<dbReference type="Gene3D" id="3.30.70.100">
    <property type="match status" value="1"/>
</dbReference>
<dbReference type="Gene3D" id="3.40.50.300">
    <property type="entry name" value="P-loop containing nucleotide triphosphate hydrolases"/>
    <property type="match status" value="1"/>
</dbReference>
<dbReference type="Gene3D" id="3.80.10.10">
    <property type="entry name" value="Ribonuclease Inhibitor"/>
    <property type="match status" value="1"/>
</dbReference>
<dbReference type="Gene3D" id="1.10.10.10">
    <property type="entry name" value="Winged helix-like DNA-binding domain superfamily/Winged helix DNA-binding domain"/>
    <property type="match status" value="1"/>
</dbReference>
<dbReference type="InterPro" id="IPR044974">
    <property type="entry name" value="Disease_R_plants"/>
</dbReference>
<dbReference type="InterPro" id="IPR006121">
    <property type="entry name" value="HMA_dom"/>
</dbReference>
<dbReference type="InterPro" id="IPR032675">
    <property type="entry name" value="LRR_dom_sf"/>
</dbReference>
<dbReference type="InterPro" id="IPR002182">
    <property type="entry name" value="NB-ARC"/>
</dbReference>
<dbReference type="InterPro" id="IPR027417">
    <property type="entry name" value="P-loop_NTPase"/>
</dbReference>
<dbReference type="InterPro" id="IPR036388">
    <property type="entry name" value="WH-like_DNA-bd_sf"/>
</dbReference>
<dbReference type="PANTHER" id="PTHR23155:SF1152">
    <property type="entry name" value="AAA+ ATPASE DOMAIN-CONTAINING PROTEIN"/>
    <property type="match status" value="1"/>
</dbReference>
<dbReference type="PANTHER" id="PTHR23155">
    <property type="entry name" value="DISEASE RESISTANCE PROTEIN RP"/>
    <property type="match status" value="1"/>
</dbReference>
<dbReference type="Pfam" id="PF00931">
    <property type="entry name" value="NB-ARC"/>
    <property type="match status" value="1"/>
</dbReference>
<dbReference type="Pfam" id="PF23559">
    <property type="entry name" value="WH_DRP"/>
    <property type="match status" value="1"/>
</dbReference>
<dbReference type="PRINTS" id="PR00364">
    <property type="entry name" value="DISEASERSIST"/>
</dbReference>
<dbReference type="SUPFAM" id="SSF52058">
    <property type="entry name" value="L domain-like"/>
    <property type="match status" value="1"/>
</dbReference>
<dbReference type="SUPFAM" id="SSF52540">
    <property type="entry name" value="P-loop containing nucleoside triphosphate hydrolases"/>
    <property type="match status" value="1"/>
</dbReference>
<dbReference type="PROSITE" id="PS50846">
    <property type="entry name" value="HMA_2"/>
    <property type="match status" value="1"/>
</dbReference>
<name>R1A3_SOLDE</name>